<organism>
    <name type="scientific">Staphylococcus aureus (strain MSSA476)</name>
    <dbReference type="NCBI Taxonomy" id="282459"/>
    <lineage>
        <taxon>Bacteria</taxon>
        <taxon>Bacillati</taxon>
        <taxon>Bacillota</taxon>
        <taxon>Bacilli</taxon>
        <taxon>Bacillales</taxon>
        <taxon>Staphylococcaceae</taxon>
        <taxon>Staphylococcus</taxon>
    </lineage>
</organism>
<evidence type="ECO:0000255" key="1">
    <source>
        <dbReference type="HAMAP-Rule" id="MF_00815"/>
    </source>
</evidence>
<proteinExistence type="inferred from homology"/>
<accession>Q6G7K6</accession>
<gene>
    <name evidence="1" type="primary">atpG</name>
    <name type="ordered locus">SAS2007</name>
</gene>
<protein>
    <recommendedName>
        <fullName evidence="1">ATP synthase gamma chain</fullName>
    </recommendedName>
    <alternativeName>
        <fullName evidence="1">ATP synthase F1 sector gamma subunit</fullName>
    </alternativeName>
    <alternativeName>
        <fullName evidence="1">F-ATPase gamma subunit</fullName>
    </alternativeName>
</protein>
<feature type="chain" id="PRO_0000073375" description="ATP synthase gamma chain">
    <location>
        <begin position="1"/>
        <end position="288"/>
    </location>
</feature>
<name>ATPG_STAAS</name>
<comment type="function">
    <text evidence="1">Produces ATP from ADP in the presence of a proton gradient across the membrane. The gamma chain is believed to be important in regulating ATPase activity and the flow of protons through the CF(0) complex.</text>
</comment>
<comment type="subunit">
    <text evidence="1">F-type ATPases have 2 components, CF(1) - the catalytic core - and CF(0) - the membrane proton channel. CF(1) has five subunits: alpha(3), beta(3), gamma(1), delta(1), epsilon(1). CF(0) has three main subunits: a, b and c.</text>
</comment>
<comment type="subcellular location">
    <subcellularLocation>
        <location evidence="1">Cell membrane</location>
        <topology evidence="1">Peripheral membrane protein</topology>
    </subcellularLocation>
</comment>
<comment type="similarity">
    <text evidence="1">Belongs to the ATPase gamma chain family.</text>
</comment>
<keyword id="KW-0066">ATP synthesis</keyword>
<keyword id="KW-1003">Cell membrane</keyword>
<keyword id="KW-0139">CF(1)</keyword>
<keyword id="KW-0375">Hydrogen ion transport</keyword>
<keyword id="KW-0406">Ion transport</keyword>
<keyword id="KW-0472">Membrane</keyword>
<keyword id="KW-0813">Transport</keyword>
<sequence>MASLKEIDTRIKSTKKMKQITKAMNMVSSSKLRRAEKNTKQFTPYMDKMQDAITAVAGASSNTNHPMLRPRKITRSGYLVITSDKGLAGAYSANVLKKLITDIEAKHQDSSEYSIVVLGQQGVDFLKNRGYDIEYSQVDVPDQPSFKSVQALANHAIDLYSEEEIDELNIYYSHYVSVLENKPTSRQVLPLSQEDSSKGHGHLSSYEFEPDKESILSVILPQYVESLIYGTILDAKASEHATRMTAMKNATDNATELIDDLSLEYNRARQAEITQQITEIVGGSAALE</sequence>
<dbReference type="EMBL" id="BX571857">
    <property type="protein sequence ID" value="CAG43815.1"/>
    <property type="molecule type" value="Genomic_DNA"/>
</dbReference>
<dbReference type="RefSeq" id="WP_000157603.1">
    <property type="nucleotide sequence ID" value="NC_002953.3"/>
</dbReference>
<dbReference type="SMR" id="Q6G7K6"/>
<dbReference type="GeneID" id="98346411"/>
<dbReference type="KEGG" id="sas:SAS2007"/>
<dbReference type="HOGENOM" id="CLU_050669_0_1_9"/>
<dbReference type="GO" id="GO:0005886">
    <property type="term" value="C:plasma membrane"/>
    <property type="evidence" value="ECO:0007669"/>
    <property type="project" value="UniProtKB-SubCell"/>
</dbReference>
<dbReference type="GO" id="GO:0045259">
    <property type="term" value="C:proton-transporting ATP synthase complex"/>
    <property type="evidence" value="ECO:0007669"/>
    <property type="project" value="UniProtKB-KW"/>
</dbReference>
<dbReference type="GO" id="GO:0005524">
    <property type="term" value="F:ATP binding"/>
    <property type="evidence" value="ECO:0007669"/>
    <property type="project" value="UniProtKB-UniRule"/>
</dbReference>
<dbReference type="GO" id="GO:0046933">
    <property type="term" value="F:proton-transporting ATP synthase activity, rotational mechanism"/>
    <property type="evidence" value="ECO:0007669"/>
    <property type="project" value="UniProtKB-UniRule"/>
</dbReference>
<dbReference type="GO" id="GO:0042777">
    <property type="term" value="P:proton motive force-driven plasma membrane ATP synthesis"/>
    <property type="evidence" value="ECO:0007669"/>
    <property type="project" value="UniProtKB-UniRule"/>
</dbReference>
<dbReference type="CDD" id="cd12151">
    <property type="entry name" value="F1-ATPase_gamma"/>
    <property type="match status" value="1"/>
</dbReference>
<dbReference type="FunFam" id="1.10.287.80:FF:000019">
    <property type="entry name" value="ATP synthase gamma chain"/>
    <property type="match status" value="1"/>
</dbReference>
<dbReference type="FunFam" id="3.40.1380.10:FF:000002">
    <property type="entry name" value="ATP synthase gamma chain"/>
    <property type="match status" value="1"/>
</dbReference>
<dbReference type="Gene3D" id="3.40.1380.10">
    <property type="match status" value="1"/>
</dbReference>
<dbReference type="Gene3D" id="1.10.287.80">
    <property type="entry name" value="ATP synthase, gamma subunit, helix hairpin domain"/>
    <property type="match status" value="1"/>
</dbReference>
<dbReference type="HAMAP" id="MF_00815">
    <property type="entry name" value="ATP_synth_gamma_bact"/>
    <property type="match status" value="1"/>
</dbReference>
<dbReference type="InterPro" id="IPR035968">
    <property type="entry name" value="ATP_synth_F1_ATPase_gsu"/>
</dbReference>
<dbReference type="InterPro" id="IPR000131">
    <property type="entry name" value="ATP_synth_F1_gsu"/>
</dbReference>
<dbReference type="NCBIfam" id="TIGR01146">
    <property type="entry name" value="ATPsyn_F1gamma"/>
    <property type="match status" value="1"/>
</dbReference>
<dbReference type="PANTHER" id="PTHR11693">
    <property type="entry name" value="ATP SYNTHASE GAMMA CHAIN"/>
    <property type="match status" value="1"/>
</dbReference>
<dbReference type="PANTHER" id="PTHR11693:SF22">
    <property type="entry name" value="ATP SYNTHASE SUBUNIT GAMMA, MITOCHONDRIAL"/>
    <property type="match status" value="1"/>
</dbReference>
<dbReference type="Pfam" id="PF00231">
    <property type="entry name" value="ATP-synt"/>
    <property type="match status" value="1"/>
</dbReference>
<dbReference type="PRINTS" id="PR00126">
    <property type="entry name" value="ATPASEGAMMA"/>
</dbReference>
<dbReference type="SUPFAM" id="SSF52943">
    <property type="entry name" value="ATP synthase (F1-ATPase), gamma subunit"/>
    <property type="match status" value="1"/>
</dbReference>
<reference key="1">
    <citation type="journal article" date="2004" name="Proc. Natl. Acad. Sci. U.S.A.">
        <title>Complete genomes of two clinical Staphylococcus aureus strains: evidence for the rapid evolution of virulence and drug resistance.</title>
        <authorList>
            <person name="Holden M.T.G."/>
            <person name="Feil E.J."/>
            <person name="Lindsay J.A."/>
            <person name="Peacock S.J."/>
            <person name="Day N.P.J."/>
            <person name="Enright M.C."/>
            <person name="Foster T.J."/>
            <person name="Moore C.E."/>
            <person name="Hurst L."/>
            <person name="Atkin R."/>
            <person name="Barron A."/>
            <person name="Bason N."/>
            <person name="Bentley S.D."/>
            <person name="Chillingworth C."/>
            <person name="Chillingworth T."/>
            <person name="Churcher C."/>
            <person name="Clark L."/>
            <person name="Corton C."/>
            <person name="Cronin A."/>
            <person name="Doggett J."/>
            <person name="Dowd L."/>
            <person name="Feltwell T."/>
            <person name="Hance Z."/>
            <person name="Harris B."/>
            <person name="Hauser H."/>
            <person name="Holroyd S."/>
            <person name="Jagels K."/>
            <person name="James K.D."/>
            <person name="Lennard N."/>
            <person name="Line A."/>
            <person name="Mayes R."/>
            <person name="Moule S."/>
            <person name="Mungall K."/>
            <person name="Ormond D."/>
            <person name="Quail M.A."/>
            <person name="Rabbinowitsch E."/>
            <person name="Rutherford K.M."/>
            <person name="Sanders M."/>
            <person name="Sharp S."/>
            <person name="Simmonds M."/>
            <person name="Stevens K."/>
            <person name="Whitehead S."/>
            <person name="Barrell B.G."/>
            <person name="Spratt B.G."/>
            <person name="Parkhill J."/>
        </authorList>
    </citation>
    <scope>NUCLEOTIDE SEQUENCE [LARGE SCALE GENOMIC DNA]</scope>
    <source>
        <strain>MSSA476</strain>
    </source>
</reference>